<proteinExistence type="evidence at protein level"/>
<comment type="function">
    <text evidence="1 2">Involved in transcription regulation by sequestering in the cytoplasm nuclear receptor coactivators such as NCOA1, NCOA2 and NCOA3 (By similarity). Involved in regulation of caspase-independent apoptosis by sequestering the proapoptotic factor AIFM1 in mitochondria (By similarity). Pro-apoptotic stimuli can induce its proteasomal degradation allowing the translocation of AIFM1 to the nucleus to induce apoptosis (By similarity). Involved in the negative control of vitamin D receptor signaling pathway (By similarity). Involved in actin stress fibers formation through its interaction with ARHGDIA and the regulation of the Rho signaling pathway (By similarity). May thereby play a role in cell adhesion and migration, regulating for instance podocytes migration during development of the kidney (By similarity). Through the Rho signaling pathway may also regulate cell proliferation (By similarity).</text>
</comment>
<comment type="subunit">
    <text evidence="1 5">Interacts (non-phosphorylated form) with NCOA1; NCOA2 AND NCOA3 (By similarity). Interacts with AIFM1 (By similarity). Interacts with ARHGDIA; the interaction is direct and may regulate the interaction of ARHGDIA with RHOA, RAC1 and CDC42 (PubMed:25961457). Interacts (via ANK repeats 1-5) with KIF21A (By similarity).</text>
</comment>
<comment type="subcellular location">
    <subcellularLocation>
        <location evidence="1">Cytoplasm</location>
    </subcellularLocation>
    <subcellularLocation>
        <location evidence="1">Mitochondrion</location>
    </subcellularLocation>
</comment>
<comment type="tissue specificity">
    <text evidence="5">Expressed by podocytes in kidney glomeruli (at protein level).</text>
</comment>
<comment type="PTM">
    <text evidence="1">Phosphorylated by casein kinase II upon estrogen stimulation (By similarity). Phosphorylation induces the release by KANK2 of NCOA1 and its translocation to the nucleus where NCOA1 can activate gene transcription (By similarity).</text>
</comment>
<dbReference type="EMBL" id="AC119556">
    <property type="status" value="NOT_ANNOTATED_CDS"/>
    <property type="molecule type" value="Genomic_DNA"/>
</dbReference>
<dbReference type="RefSeq" id="XP_006242651.1">
    <property type="nucleotide sequence ID" value="XM_006242589.5"/>
</dbReference>
<dbReference type="RefSeq" id="XP_006242652.1">
    <property type="nucleotide sequence ID" value="XM_006242590.5"/>
</dbReference>
<dbReference type="RefSeq" id="XP_063120779.1">
    <property type="nucleotide sequence ID" value="XM_063264709.1"/>
</dbReference>
<dbReference type="SMR" id="D3ZD05"/>
<dbReference type="FunCoup" id="D3ZD05">
    <property type="interactions" value="1575"/>
</dbReference>
<dbReference type="IntAct" id="D3ZD05">
    <property type="interactions" value="2"/>
</dbReference>
<dbReference type="MINT" id="D3ZD05"/>
<dbReference type="STRING" id="10116.ENSRNOP00000048736"/>
<dbReference type="GlyGen" id="D3ZD05">
    <property type="glycosylation" value="2 sites, 1 O-linked glycan (1 site)"/>
</dbReference>
<dbReference type="iPTMnet" id="D3ZD05"/>
<dbReference type="PhosphoSitePlus" id="D3ZD05"/>
<dbReference type="PaxDb" id="10116-ENSRNOP00000014135"/>
<dbReference type="PeptideAtlas" id="D3ZD05"/>
<dbReference type="Ensembl" id="ENSRNOT00000014135.8">
    <property type="protein sequence ID" value="ENSRNOP00000014135.6"/>
    <property type="gene ID" value="ENSRNOG00000010643.8"/>
</dbReference>
<dbReference type="GeneID" id="100361376"/>
<dbReference type="AGR" id="RGD:2320289"/>
<dbReference type="CTD" id="25959"/>
<dbReference type="RGD" id="2320289">
    <property type="gene designation" value="Kank2"/>
</dbReference>
<dbReference type="InParanoid" id="D3ZD05"/>
<dbReference type="OMA" id="DTVVQKC"/>
<dbReference type="OrthoDB" id="5406014at2759"/>
<dbReference type="PRO" id="PR:D3ZD05"/>
<dbReference type="Proteomes" id="UP000002494">
    <property type="component" value="Chromosome 8"/>
</dbReference>
<dbReference type="Bgee" id="ENSRNOG00000010643">
    <property type="expression patterns" value="Expressed in heart and 18 other cell types or tissues"/>
</dbReference>
<dbReference type="ExpressionAtlas" id="D3ZD05">
    <property type="expression patterns" value="baseline and differential"/>
</dbReference>
<dbReference type="GO" id="GO:0005737">
    <property type="term" value="C:cytoplasm"/>
    <property type="evidence" value="ECO:0000266"/>
    <property type="project" value="RGD"/>
</dbReference>
<dbReference type="GO" id="GO:0005739">
    <property type="term" value="C:mitochondrion"/>
    <property type="evidence" value="ECO:0000266"/>
    <property type="project" value="RGD"/>
</dbReference>
<dbReference type="GO" id="GO:0006915">
    <property type="term" value="P:apoptotic process"/>
    <property type="evidence" value="ECO:0007669"/>
    <property type="project" value="UniProtKB-KW"/>
</dbReference>
<dbReference type="GO" id="GO:0072073">
    <property type="term" value="P:kidney epithelium development"/>
    <property type="evidence" value="ECO:0000250"/>
    <property type="project" value="UniProtKB"/>
</dbReference>
<dbReference type="GO" id="GO:0030837">
    <property type="term" value="P:negative regulation of actin filament polymerization"/>
    <property type="evidence" value="ECO:0007669"/>
    <property type="project" value="InterPro"/>
</dbReference>
<dbReference type="GO" id="GO:0008285">
    <property type="term" value="P:negative regulation of cell population proliferation"/>
    <property type="evidence" value="ECO:0000266"/>
    <property type="project" value="RGD"/>
</dbReference>
<dbReference type="GO" id="GO:2000134">
    <property type="term" value="P:negative regulation of G1/S transition of mitotic cell cycle"/>
    <property type="evidence" value="ECO:0000266"/>
    <property type="project" value="RGD"/>
</dbReference>
<dbReference type="GO" id="GO:0033147">
    <property type="term" value="P:negative regulation of intracellular estrogen receptor signaling pathway"/>
    <property type="evidence" value="ECO:0000266"/>
    <property type="project" value="RGD"/>
</dbReference>
<dbReference type="GO" id="GO:0043069">
    <property type="term" value="P:negative regulation of programmed cell death"/>
    <property type="evidence" value="ECO:0000266"/>
    <property type="project" value="RGD"/>
</dbReference>
<dbReference type="GO" id="GO:0000122">
    <property type="term" value="P:negative regulation of transcription by RNA polymerase II"/>
    <property type="evidence" value="ECO:0000266"/>
    <property type="project" value="RGD"/>
</dbReference>
<dbReference type="GO" id="GO:0070563">
    <property type="term" value="P:negative regulation of vitamin D receptor signaling pathway"/>
    <property type="evidence" value="ECO:0000266"/>
    <property type="project" value="RGD"/>
</dbReference>
<dbReference type="GO" id="GO:0090521">
    <property type="term" value="P:podocyte cell migration"/>
    <property type="evidence" value="ECO:0000250"/>
    <property type="project" value="UniProtKB"/>
</dbReference>
<dbReference type="GO" id="GO:0035023">
    <property type="term" value="P:regulation of Rho protein signal transduction"/>
    <property type="evidence" value="ECO:0000250"/>
    <property type="project" value="UniProtKB"/>
</dbReference>
<dbReference type="FunFam" id="1.25.40.20:FF:000017">
    <property type="entry name" value="KN motif and ankyrin repeat domain-containing protein 1"/>
    <property type="match status" value="1"/>
</dbReference>
<dbReference type="Gene3D" id="1.25.40.20">
    <property type="entry name" value="Ankyrin repeat-containing domain"/>
    <property type="match status" value="1"/>
</dbReference>
<dbReference type="InterPro" id="IPR002110">
    <property type="entry name" value="Ankyrin_rpt"/>
</dbReference>
<dbReference type="InterPro" id="IPR036770">
    <property type="entry name" value="Ankyrin_rpt-contain_sf"/>
</dbReference>
<dbReference type="InterPro" id="IPR047184">
    <property type="entry name" value="KANK1-4"/>
</dbReference>
<dbReference type="InterPro" id="IPR021939">
    <property type="entry name" value="KN_motif"/>
</dbReference>
<dbReference type="PANTHER" id="PTHR24168">
    <property type="entry name" value="KN MOTIF AND ANKYRIN REPEAT DOMAIN-CONTAINING"/>
    <property type="match status" value="1"/>
</dbReference>
<dbReference type="PANTHER" id="PTHR24168:SF0">
    <property type="entry name" value="KN MOTIF AND ANKYRIN REPEAT DOMAIN-CONTAINING PROTEIN 2"/>
    <property type="match status" value="1"/>
</dbReference>
<dbReference type="Pfam" id="PF00023">
    <property type="entry name" value="Ank"/>
    <property type="match status" value="1"/>
</dbReference>
<dbReference type="Pfam" id="PF12796">
    <property type="entry name" value="Ank_2"/>
    <property type="match status" value="1"/>
</dbReference>
<dbReference type="Pfam" id="PF12075">
    <property type="entry name" value="KN_motif"/>
    <property type="match status" value="1"/>
</dbReference>
<dbReference type="SMART" id="SM00248">
    <property type="entry name" value="ANK"/>
    <property type="match status" value="5"/>
</dbReference>
<dbReference type="SUPFAM" id="SSF48403">
    <property type="entry name" value="Ankyrin repeat"/>
    <property type="match status" value="1"/>
</dbReference>
<dbReference type="PROSITE" id="PS50297">
    <property type="entry name" value="ANK_REP_REGION"/>
    <property type="match status" value="1"/>
</dbReference>
<dbReference type="PROSITE" id="PS50088">
    <property type="entry name" value="ANK_REPEAT"/>
    <property type="match status" value="2"/>
</dbReference>
<organism>
    <name type="scientific">Rattus norvegicus</name>
    <name type="common">Rat</name>
    <dbReference type="NCBI Taxonomy" id="10116"/>
    <lineage>
        <taxon>Eukaryota</taxon>
        <taxon>Metazoa</taxon>
        <taxon>Chordata</taxon>
        <taxon>Craniata</taxon>
        <taxon>Vertebrata</taxon>
        <taxon>Euteleostomi</taxon>
        <taxon>Mammalia</taxon>
        <taxon>Eutheria</taxon>
        <taxon>Euarchontoglires</taxon>
        <taxon>Glires</taxon>
        <taxon>Rodentia</taxon>
        <taxon>Myomorpha</taxon>
        <taxon>Muroidea</taxon>
        <taxon>Muridae</taxon>
        <taxon>Murinae</taxon>
        <taxon>Rattus</taxon>
    </lineage>
</organism>
<gene>
    <name evidence="6" type="primary">Kank2</name>
</gene>
<protein>
    <recommendedName>
        <fullName>KN motif and ankyrin repeat domain-containing protein 2</fullName>
    </recommendedName>
</protein>
<name>KANK2_RAT</name>
<reference key="1">
    <citation type="journal article" date="2004" name="Nature">
        <title>Genome sequence of the Brown Norway rat yields insights into mammalian evolution.</title>
        <authorList>
            <person name="Gibbs R.A."/>
            <person name="Weinstock G.M."/>
            <person name="Metzker M.L."/>
            <person name="Muzny D.M."/>
            <person name="Sodergren E.J."/>
            <person name="Scherer S."/>
            <person name="Scott G."/>
            <person name="Steffen D."/>
            <person name="Worley K.C."/>
            <person name="Burch P.E."/>
            <person name="Okwuonu G."/>
            <person name="Hines S."/>
            <person name="Lewis L."/>
            <person name="Deramo C."/>
            <person name="Delgado O."/>
            <person name="Dugan-Rocha S."/>
            <person name="Miner G."/>
            <person name="Morgan M."/>
            <person name="Hawes A."/>
            <person name="Gill R."/>
            <person name="Holt R.A."/>
            <person name="Adams M.D."/>
            <person name="Amanatides P.G."/>
            <person name="Baden-Tillson H."/>
            <person name="Barnstead M."/>
            <person name="Chin S."/>
            <person name="Evans C.A."/>
            <person name="Ferriera S."/>
            <person name="Fosler C."/>
            <person name="Glodek A."/>
            <person name="Gu Z."/>
            <person name="Jennings D."/>
            <person name="Kraft C.L."/>
            <person name="Nguyen T."/>
            <person name="Pfannkoch C.M."/>
            <person name="Sitter C."/>
            <person name="Sutton G.G."/>
            <person name="Venter J.C."/>
            <person name="Woodage T."/>
            <person name="Smith D."/>
            <person name="Lee H.-M."/>
            <person name="Gustafson E."/>
            <person name="Cahill P."/>
            <person name="Kana A."/>
            <person name="Doucette-Stamm L."/>
            <person name="Weinstock K."/>
            <person name="Fechtel K."/>
            <person name="Weiss R.B."/>
            <person name="Dunn D.M."/>
            <person name="Green E.D."/>
            <person name="Blakesley R.W."/>
            <person name="Bouffard G.G."/>
            <person name="De Jong P.J."/>
            <person name="Osoegawa K."/>
            <person name="Zhu B."/>
            <person name="Marra M."/>
            <person name="Schein J."/>
            <person name="Bosdet I."/>
            <person name="Fjell C."/>
            <person name="Jones S."/>
            <person name="Krzywinski M."/>
            <person name="Mathewson C."/>
            <person name="Siddiqui A."/>
            <person name="Wye N."/>
            <person name="McPherson J."/>
            <person name="Zhao S."/>
            <person name="Fraser C.M."/>
            <person name="Shetty J."/>
            <person name="Shatsman S."/>
            <person name="Geer K."/>
            <person name="Chen Y."/>
            <person name="Abramzon S."/>
            <person name="Nierman W.C."/>
            <person name="Havlak P.H."/>
            <person name="Chen R."/>
            <person name="Durbin K.J."/>
            <person name="Egan A."/>
            <person name="Ren Y."/>
            <person name="Song X.-Z."/>
            <person name="Li B."/>
            <person name="Liu Y."/>
            <person name="Qin X."/>
            <person name="Cawley S."/>
            <person name="Cooney A.J."/>
            <person name="D'Souza L.M."/>
            <person name="Martin K."/>
            <person name="Wu J.Q."/>
            <person name="Gonzalez-Garay M.L."/>
            <person name="Jackson A.R."/>
            <person name="Kalafus K.J."/>
            <person name="McLeod M.P."/>
            <person name="Milosavljevic A."/>
            <person name="Virk D."/>
            <person name="Volkov A."/>
            <person name="Wheeler D.A."/>
            <person name="Zhang Z."/>
            <person name="Bailey J.A."/>
            <person name="Eichler E.E."/>
            <person name="Tuzun E."/>
            <person name="Birney E."/>
            <person name="Mongin E."/>
            <person name="Ureta-Vidal A."/>
            <person name="Woodwark C."/>
            <person name="Zdobnov E."/>
            <person name="Bork P."/>
            <person name="Suyama M."/>
            <person name="Torrents D."/>
            <person name="Alexandersson M."/>
            <person name="Trask B.J."/>
            <person name="Young J.M."/>
            <person name="Huang H."/>
            <person name="Wang H."/>
            <person name="Xing H."/>
            <person name="Daniels S."/>
            <person name="Gietzen D."/>
            <person name="Schmidt J."/>
            <person name="Stevens K."/>
            <person name="Vitt U."/>
            <person name="Wingrove J."/>
            <person name="Camara F."/>
            <person name="Mar Alba M."/>
            <person name="Abril J.F."/>
            <person name="Guigo R."/>
            <person name="Smit A."/>
            <person name="Dubchak I."/>
            <person name="Rubin E.M."/>
            <person name="Couronne O."/>
            <person name="Poliakov A."/>
            <person name="Huebner N."/>
            <person name="Ganten D."/>
            <person name="Goesele C."/>
            <person name="Hummel O."/>
            <person name="Kreitler T."/>
            <person name="Lee Y.-A."/>
            <person name="Monti J."/>
            <person name="Schulz H."/>
            <person name="Zimdahl H."/>
            <person name="Himmelbauer H."/>
            <person name="Lehrach H."/>
            <person name="Jacob H.J."/>
            <person name="Bromberg S."/>
            <person name="Gullings-Handley J."/>
            <person name="Jensen-Seaman M.I."/>
            <person name="Kwitek A.E."/>
            <person name="Lazar J."/>
            <person name="Pasko D."/>
            <person name="Tonellato P.J."/>
            <person name="Twigger S."/>
            <person name="Ponting C.P."/>
            <person name="Duarte J.M."/>
            <person name="Rice S."/>
            <person name="Goodstadt L."/>
            <person name="Beatson S.A."/>
            <person name="Emes R.D."/>
            <person name="Winter E.E."/>
            <person name="Webber C."/>
            <person name="Brandt P."/>
            <person name="Nyakatura G."/>
            <person name="Adetobi M."/>
            <person name="Chiaromonte F."/>
            <person name="Elnitski L."/>
            <person name="Eswara P."/>
            <person name="Hardison R.C."/>
            <person name="Hou M."/>
            <person name="Kolbe D."/>
            <person name="Makova K."/>
            <person name="Miller W."/>
            <person name="Nekrutenko A."/>
            <person name="Riemer C."/>
            <person name="Schwartz S."/>
            <person name="Taylor J."/>
            <person name="Yang S."/>
            <person name="Zhang Y."/>
            <person name="Lindpaintner K."/>
            <person name="Andrews T.D."/>
            <person name="Caccamo M."/>
            <person name="Clamp M."/>
            <person name="Clarke L."/>
            <person name="Curwen V."/>
            <person name="Durbin R.M."/>
            <person name="Eyras E."/>
            <person name="Searle S.M."/>
            <person name="Cooper G.M."/>
            <person name="Batzoglou S."/>
            <person name="Brudno M."/>
            <person name="Sidow A."/>
            <person name="Stone E.A."/>
            <person name="Payseur B.A."/>
            <person name="Bourque G."/>
            <person name="Lopez-Otin C."/>
            <person name="Puente X.S."/>
            <person name="Chakrabarti K."/>
            <person name="Chatterji S."/>
            <person name="Dewey C."/>
            <person name="Pachter L."/>
            <person name="Bray N."/>
            <person name="Yap V.B."/>
            <person name="Caspi A."/>
            <person name="Tesler G."/>
            <person name="Pevzner P.A."/>
            <person name="Haussler D."/>
            <person name="Roskin K.M."/>
            <person name="Baertsch R."/>
            <person name="Clawson H."/>
            <person name="Furey T.S."/>
            <person name="Hinrichs A.S."/>
            <person name="Karolchik D."/>
            <person name="Kent W.J."/>
            <person name="Rosenbloom K.R."/>
            <person name="Trumbower H."/>
            <person name="Weirauch M."/>
            <person name="Cooper D.N."/>
            <person name="Stenson P.D."/>
            <person name="Ma B."/>
            <person name="Brent M."/>
            <person name="Arumugam M."/>
            <person name="Shteynberg D."/>
            <person name="Copley R.R."/>
            <person name="Taylor M.S."/>
            <person name="Riethman H."/>
            <person name="Mudunuri U."/>
            <person name="Peterson J."/>
            <person name="Guyer M."/>
            <person name="Felsenfeld A."/>
            <person name="Old S."/>
            <person name="Mockrin S."/>
            <person name="Collins F.S."/>
        </authorList>
    </citation>
    <scope>NUCLEOTIDE SEQUENCE [LARGE SCALE GENOMIC DNA]</scope>
    <source>
        <strain>Brown Norway</strain>
    </source>
</reference>
<reference key="2">
    <citation type="journal article" date="2012" name="Nat. Commun.">
        <title>Quantitative maps of protein phosphorylation sites across 14 different rat organs and tissues.</title>
        <authorList>
            <person name="Lundby A."/>
            <person name="Secher A."/>
            <person name="Lage K."/>
            <person name="Nordsborg N.B."/>
            <person name="Dmytriyev A."/>
            <person name="Lundby C."/>
            <person name="Olsen J.V."/>
        </authorList>
    </citation>
    <scope>IDENTIFICATION BY MASS SPECTROMETRY [LARGE SCALE ANALYSIS]</scope>
</reference>
<reference key="3">
    <citation type="journal article" date="2015" name="J. Clin. Invest.">
        <title>KANK deficiency leads to podocyte dysfunction and nephrotic syndrome.</title>
        <authorList>
            <person name="Gee H.Y."/>
            <person name="Zhang F."/>
            <person name="Ashraf S."/>
            <person name="Kohl S."/>
            <person name="Sadowski C.E."/>
            <person name="Vega-Warner V."/>
            <person name="Zhou W."/>
            <person name="Lovric S."/>
            <person name="Fang H."/>
            <person name="Nettleton M."/>
            <person name="Zhu J.Y."/>
            <person name="Hoefele J."/>
            <person name="Weber L.T."/>
            <person name="Podracka L."/>
            <person name="Boor A."/>
            <person name="Fehrenbach H."/>
            <person name="Innis J.W."/>
            <person name="Washburn J."/>
            <person name="Levy S."/>
            <person name="Lifton R.P."/>
            <person name="Otto E.A."/>
            <person name="Han Z."/>
            <person name="Hildebrandt F."/>
        </authorList>
    </citation>
    <scope>INTERACTION WITH ARHGDIA</scope>
    <scope>TISSUE SPECIFICITY</scope>
</reference>
<feature type="chain" id="PRO_0000445621" description="KN motif and ankyrin repeat domain-containing protein 2">
    <location>
        <begin position="1"/>
        <end position="847"/>
    </location>
</feature>
<feature type="repeat" description="ANK 0; degenerate" evidence="1">
    <location>
        <begin position="610"/>
        <end position="647"/>
    </location>
</feature>
<feature type="repeat" description="ANK 1" evidence="3">
    <location>
        <begin position="662"/>
        <end position="692"/>
    </location>
</feature>
<feature type="repeat" description="ANK 2" evidence="3">
    <location>
        <begin position="696"/>
        <end position="729"/>
    </location>
</feature>
<feature type="repeat" description="ANK 3" evidence="3">
    <location>
        <begin position="734"/>
        <end position="763"/>
    </location>
</feature>
<feature type="repeat" description="ANK 4" evidence="3">
    <location>
        <begin position="767"/>
        <end position="797"/>
    </location>
</feature>
<feature type="repeat" description="ANK 5" evidence="3">
    <location>
        <begin position="801"/>
        <end position="831"/>
    </location>
</feature>
<feature type="region of interest" description="Interaction with AIFM1" evidence="1">
    <location>
        <begin position="1"/>
        <end position="72"/>
    </location>
</feature>
<feature type="region of interest" description="Disordered" evidence="4">
    <location>
        <begin position="1"/>
        <end position="32"/>
    </location>
</feature>
<feature type="region of interest" description="Disordered" evidence="4">
    <location>
        <begin position="161"/>
        <end position="182"/>
    </location>
</feature>
<feature type="region of interest" description="Disordered" evidence="4">
    <location>
        <begin position="414"/>
        <end position="473"/>
    </location>
</feature>
<feature type="region of interest" description="Disordered" evidence="4">
    <location>
        <begin position="502"/>
        <end position="581"/>
    </location>
</feature>
<feature type="region of interest" description="Interaction with NCOA1" evidence="1">
    <location>
        <begin position="665"/>
        <end position="831"/>
    </location>
</feature>
<feature type="coiled-coil region" evidence="3">
    <location>
        <begin position="187"/>
        <end position="207"/>
    </location>
</feature>
<feature type="coiled-coil region" evidence="3">
    <location>
        <begin position="284"/>
        <end position="311"/>
    </location>
</feature>
<feature type="compositionally biased region" description="Pro residues" evidence="4">
    <location>
        <begin position="420"/>
        <end position="433"/>
    </location>
</feature>
<feature type="compositionally biased region" description="Low complexity" evidence="4">
    <location>
        <begin position="434"/>
        <end position="446"/>
    </location>
</feature>
<feature type="compositionally biased region" description="Low complexity" evidence="4">
    <location>
        <begin position="506"/>
        <end position="516"/>
    </location>
</feature>
<feature type="modified residue" description="Phosphoserine" evidence="1">
    <location>
        <position position="19"/>
    </location>
</feature>
<feature type="modified residue" description="Phosphoserine" evidence="2">
    <location>
        <position position="83"/>
    </location>
</feature>
<feature type="modified residue" description="Phosphoserine" evidence="2">
    <location>
        <position position="86"/>
    </location>
</feature>
<feature type="modified residue" description="Phosphoserine" evidence="2">
    <location>
        <position position="89"/>
    </location>
</feature>
<feature type="modified residue" description="Phosphoserine" evidence="1">
    <location>
        <position position="92"/>
    </location>
</feature>
<feature type="modified residue" description="Omega-N-methylarginine" evidence="1">
    <location>
        <position position="105"/>
    </location>
</feature>
<feature type="modified residue" description="Phosphothreonine" evidence="2">
    <location>
        <position position="170"/>
    </location>
</feature>
<feature type="modified residue" description="Phosphothreonine" evidence="1">
    <location>
        <position position="331"/>
    </location>
</feature>
<feature type="modified residue" description="Phosphoserine" evidence="1">
    <location>
        <position position="358"/>
    </location>
</feature>
<feature type="modified residue" description="Phosphoserine" evidence="1">
    <location>
        <position position="536"/>
    </location>
</feature>
<accession>D3ZD05</accession>
<evidence type="ECO:0000250" key="1">
    <source>
        <dbReference type="UniProtKB" id="Q63ZY3"/>
    </source>
</evidence>
<evidence type="ECO:0000250" key="2">
    <source>
        <dbReference type="UniProtKB" id="Q8BX02"/>
    </source>
</evidence>
<evidence type="ECO:0000255" key="3"/>
<evidence type="ECO:0000256" key="4">
    <source>
        <dbReference type="SAM" id="MobiDB-lite"/>
    </source>
</evidence>
<evidence type="ECO:0000269" key="5">
    <source>
    </source>
</evidence>
<evidence type="ECO:0000312" key="6">
    <source>
        <dbReference type="RGD" id="2320289"/>
    </source>
</evidence>
<sequence>MAQVLHVPAPFPGTPGQASSAAFPNKEPDPPYSVETPYGYRLDLDFLKYVDDIEKGHTLRRVPVQRRPRLGSLPRGPGSWWTSTESLCSDASGDSRHSAYSYCGRGFYPQYGALETRSGTNPRVERTLLDARRRLEDQAAAPSSGGLGSLTPSAAGSTSSLAGVGLLPPTPRSSGLSTPVAPSAGHLAHVREQMAGALRKLRQLEEQVKLIPVLQVKLSVLQEEKRQLTVQLKSQKFLGHPSGTRSRSELCLDLPEAPDDPAVLETRSVGTWVRERDLGIPDGEAALVAKVAVLETQLKKALQELRAAQTQQVDLQPQAWPPPDTQVRVDTVRVVEGPREVEVAASTAAGAPAQRAQSLEPYGAGLKALATSAENTLVFRSHEVVETMCPLPTASTSNMHTAKKISITERNCTGAARMADPPPSPAEPSPSSPYPAAEPENPAPAAQDTTDRELTRPVASQDSQAAEGAGGASLGVQSALKRKEVPADPDVHQRNLQFVGINGGYESSSEDSSTAENSEHESTENEAPEPPVRVLSTAEGPQLRPLGPAVGKTSQDERQLSQESQRVPEAKVAPGPDPEEEIRMDLSPDLISACLALEKYLENPNALTERELKVAYTTVLQEWLRLACRSDAHPELVRRHLVTFRAMSARLLDYVVNIADSNGNTALHYSVSHANFPVVRQLLDSGVCQVDKLNRAGYSPIMLTALATLKTQDDIDTILQLFRLGNVNAKASQAGQTALMLAVSHGRVDVVKALLACEVDVNMQDEDGSTALMCACEHGHKEITGLLLAVPSCDISLTDRDGSTALMVALDAGQSEIASMLYSRMNIKCSFAPMSDYESPASSSAEE</sequence>
<keyword id="KW-0040">ANK repeat</keyword>
<keyword id="KW-0053">Apoptosis</keyword>
<keyword id="KW-0175">Coiled coil</keyword>
<keyword id="KW-0963">Cytoplasm</keyword>
<keyword id="KW-0488">Methylation</keyword>
<keyword id="KW-0496">Mitochondrion</keyword>
<keyword id="KW-0597">Phosphoprotein</keyword>
<keyword id="KW-1185">Reference proteome</keyword>
<keyword id="KW-0677">Repeat</keyword>
<keyword id="KW-0804">Transcription</keyword>
<keyword id="KW-0805">Transcription regulation</keyword>